<feature type="chain" id="PRO_0000306743" description="Small ribosomal subunit protein uS13">
    <location>
        <begin position="1"/>
        <end position="122"/>
    </location>
</feature>
<feature type="region of interest" description="Disordered" evidence="2">
    <location>
        <begin position="97"/>
        <end position="122"/>
    </location>
</feature>
<feature type="compositionally biased region" description="Basic residues" evidence="2">
    <location>
        <begin position="97"/>
        <end position="114"/>
    </location>
</feature>
<dbReference type="EMBL" id="AE017321">
    <property type="protein sequence ID" value="AAW70909.1"/>
    <property type="molecule type" value="Genomic_DNA"/>
</dbReference>
<dbReference type="RefSeq" id="WP_011256519.1">
    <property type="nucleotide sequence ID" value="NC_006833.1"/>
</dbReference>
<dbReference type="SMR" id="Q5GSW5"/>
<dbReference type="STRING" id="292805.Wbm0320"/>
<dbReference type="KEGG" id="wbm:Wbm0320"/>
<dbReference type="eggNOG" id="COG0099">
    <property type="taxonomic scope" value="Bacteria"/>
</dbReference>
<dbReference type="HOGENOM" id="CLU_103849_1_2_5"/>
<dbReference type="Proteomes" id="UP000000534">
    <property type="component" value="Chromosome"/>
</dbReference>
<dbReference type="GO" id="GO:0005829">
    <property type="term" value="C:cytosol"/>
    <property type="evidence" value="ECO:0007669"/>
    <property type="project" value="TreeGrafter"/>
</dbReference>
<dbReference type="GO" id="GO:0015935">
    <property type="term" value="C:small ribosomal subunit"/>
    <property type="evidence" value="ECO:0007669"/>
    <property type="project" value="TreeGrafter"/>
</dbReference>
<dbReference type="GO" id="GO:0019843">
    <property type="term" value="F:rRNA binding"/>
    <property type="evidence" value="ECO:0007669"/>
    <property type="project" value="UniProtKB-UniRule"/>
</dbReference>
<dbReference type="GO" id="GO:0003735">
    <property type="term" value="F:structural constituent of ribosome"/>
    <property type="evidence" value="ECO:0007669"/>
    <property type="project" value="InterPro"/>
</dbReference>
<dbReference type="GO" id="GO:0000049">
    <property type="term" value="F:tRNA binding"/>
    <property type="evidence" value="ECO:0007669"/>
    <property type="project" value="UniProtKB-UniRule"/>
</dbReference>
<dbReference type="GO" id="GO:0006412">
    <property type="term" value="P:translation"/>
    <property type="evidence" value="ECO:0007669"/>
    <property type="project" value="UniProtKB-UniRule"/>
</dbReference>
<dbReference type="FunFam" id="1.10.8.50:FF:000001">
    <property type="entry name" value="30S ribosomal protein S13"/>
    <property type="match status" value="1"/>
</dbReference>
<dbReference type="FunFam" id="4.10.910.10:FF:000001">
    <property type="entry name" value="30S ribosomal protein S13"/>
    <property type="match status" value="1"/>
</dbReference>
<dbReference type="Gene3D" id="1.10.8.50">
    <property type="match status" value="1"/>
</dbReference>
<dbReference type="Gene3D" id="4.10.910.10">
    <property type="entry name" value="30s ribosomal protein s13, domain 2"/>
    <property type="match status" value="1"/>
</dbReference>
<dbReference type="HAMAP" id="MF_01315">
    <property type="entry name" value="Ribosomal_uS13"/>
    <property type="match status" value="1"/>
</dbReference>
<dbReference type="InterPro" id="IPR027437">
    <property type="entry name" value="Rbsml_uS13_C"/>
</dbReference>
<dbReference type="InterPro" id="IPR001892">
    <property type="entry name" value="Ribosomal_uS13"/>
</dbReference>
<dbReference type="InterPro" id="IPR010979">
    <property type="entry name" value="Ribosomal_uS13-like_H2TH"/>
</dbReference>
<dbReference type="InterPro" id="IPR019980">
    <property type="entry name" value="Ribosomal_uS13_bac-type"/>
</dbReference>
<dbReference type="InterPro" id="IPR018269">
    <property type="entry name" value="Ribosomal_uS13_CS"/>
</dbReference>
<dbReference type="NCBIfam" id="TIGR03631">
    <property type="entry name" value="uS13_bact"/>
    <property type="match status" value="1"/>
</dbReference>
<dbReference type="PANTHER" id="PTHR10871">
    <property type="entry name" value="30S RIBOSOMAL PROTEIN S13/40S RIBOSOMAL PROTEIN S18"/>
    <property type="match status" value="1"/>
</dbReference>
<dbReference type="PANTHER" id="PTHR10871:SF1">
    <property type="entry name" value="SMALL RIBOSOMAL SUBUNIT PROTEIN US13M"/>
    <property type="match status" value="1"/>
</dbReference>
<dbReference type="Pfam" id="PF00416">
    <property type="entry name" value="Ribosomal_S13"/>
    <property type="match status" value="1"/>
</dbReference>
<dbReference type="PIRSF" id="PIRSF002134">
    <property type="entry name" value="Ribosomal_S13"/>
    <property type="match status" value="1"/>
</dbReference>
<dbReference type="SUPFAM" id="SSF46946">
    <property type="entry name" value="S13-like H2TH domain"/>
    <property type="match status" value="1"/>
</dbReference>
<dbReference type="PROSITE" id="PS00646">
    <property type="entry name" value="RIBOSOMAL_S13_1"/>
    <property type="match status" value="1"/>
</dbReference>
<dbReference type="PROSITE" id="PS50159">
    <property type="entry name" value="RIBOSOMAL_S13_2"/>
    <property type="match status" value="1"/>
</dbReference>
<proteinExistence type="inferred from homology"/>
<protein>
    <recommendedName>
        <fullName evidence="1">Small ribosomal subunit protein uS13</fullName>
    </recommendedName>
    <alternativeName>
        <fullName evidence="3">30S ribosomal protein S13</fullName>
    </alternativeName>
</protein>
<comment type="function">
    <text evidence="1">Located at the top of the head of the 30S subunit, it contacts several helices of the 16S rRNA. In the 70S ribosome it contacts the 23S rRNA (bridge B1a) and protein L5 of the 50S subunit (bridge B1b), connecting the 2 subunits; these bridges are implicated in subunit movement. Contacts the tRNAs in the A and P-sites.</text>
</comment>
<comment type="subunit">
    <text evidence="1">Part of the 30S ribosomal subunit. Forms a loose heterodimer with protein S19. Forms two bridges to the 50S subunit in the 70S ribosome.</text>
</comment>
<comment type="similarity">
    <text evidence="1">Belongs to the universal ribosomal protein uS13 family.</text>
</comment>
<name>RS13_WOLTR</name>
<organism>
    <name type="scientific">Wolbachia sp. subsp. Brugia malayi (strain TRS)</name>
    <dbReference type="NCBI Taxonomy" id="292805"/>
    <lineage>
        <taxon>Bacteria</taxon>
        <taxon>Pseudomonadati</taxon>
        <taxon>Pseudomonadota</taxon>
        <taxon>Alphaproteobacteria</taxon>
        <taxon>Rickettsiales</taxon>
        <taxon>Anaplasmataceae</taxon>
        <taxon>Wolbachieae</taxon>
        <taxon>Wolbachia</taxon>
    </lineage>
</organism>
<reference key="1">
    <citation type="journal article" date="2005" name="PLoS Biol.">
        <title>The Wolbachia genome of Brugia malayi: endosymbiont evolution within a human pathogenic nematode.</title>
        <authorList>
            <person name="Foster J."/>
            <person name="Ganatra M."/>
            <person name="Kamal I."/>
            <person name="Ware J."/>
            <person name="Makarova K."/>
            <person name="Ivanova N."/>
            <person name="Bhattacharyya A."/>
            <person name="Kapatral V."/>
            <person name="Kumar S."/>
            <person name="Posfai J."/>
            <person name="Vincze T."/>
            <person name="Ingram J."/>
            <person name="Moran L."/>
            <person name="Lapidus A."/>
            <person name="Omelchenko M."/>
            <person name="Kyrpides N."/>
            <person name="Ghedin E."/>
            <person name="Wang S."/>
            <person name="Goltsman E."/>
            <person name="Joukov V."/>
            <person name="Ostrovskaya O."/>
            <person name="Tsukerman K."/>
            <person name="Mazur M."/>
            <person name="Comb D."/>
            <person name="Koonin E."/>
            <person name="Slatko B."/>
        </authorList>
    </citation>
    <scope>NUCLEOTIDE SEQUENCE [LARGE SCALE GENOMIC DNA]</scope>
    <source>
        <strain>TRS</strain>
    </source>
</reference>
<keyword id="KW-1185">Reference proteome</keyword>
<keyword id="KW-0687">Ribonucleoprotein</keyword>
<keyword id="KW-0689">Ribosomal protein</keyword>
<keyword id="KW-0694">RNA-binding</keyword>
<keyword id="KW-0699">rRNA-binding</keyword>
<keyword id="KW-0820">tRNA-binding</keyword>
<evidence type="ECO:0000255" key="1">
    <source>
        <dbReference type="HAMAP-Rule" id="MF_01315"/>
    </source>
</evidence>
<evidence type="ECO:0000256" key="2">
    <source>
        <dbReference type="SAM" id="MobiDB-lite"/>
    </source>
</evidence>
<evidence type="ECO:0000305" key="3"/>
<sequence length="122" mass="13671">MTRIAGVNVPVKKCIPFGLTYIYGIGISTANIICHACGIDKSKRVSELRDKDIEKINSFIRQNYSIEGDLRKEVAMNIKSLVEMGCYRGVRHRKGLPVRGQRTHTNAKTRKGKSRLPIAGKE</sequence>
<accession>Q5GSW5</accession>
<gene>
    <name evidence="1" type="primary">rpsM</name>
    <name type="ordered locus">Wbm0320</name>
</gene>